<reference key="1">
    <citation type="journal article" date="2004" name="Arch. Virol.">
        <title>Genomic characterization of two Chinese isolates of porcine respiratory and reproductive syndrome virus.</title>
        <authorList>
            <person name="Gao Z.Q."/>
            <person name="Guo X."/>
            <person name="Yang H.C."/>
        </authorList>
    </citation>
    <scope>NUCLEOTIDE SEQUENCE [GENOMIC RNA]</scope>
</reference>
<accession>Q8B912</accession>
<accession>Q8B911</accession>
<evidence type="ECO:0000250" key="1"/>
<evidence type="ECO:0000250" key="2">
    <source>
        <dbReference type="UniProtKB" id="A0MD28"/>
    </source>
</evidence>
<evidence type="ECO:0000250" key="3">
    <source>
        <dbReference type="UniProtKB" id="A6YQT5"/>
    </source>
</evidence>
<evidence type="ECO:0000250" key="4">
    <source>
        <dbReference type="UniProtKB" id="P0C6X7"/>
    </source>
</evidence>
<evidence type="ECO:0000250" key="5">
    <source>
        <dbReference type="UniProtKB" id="P19811"/>
    </source>
</evidence>
<evidence type="ECO:0000250" key="6">
    <source>
        <dbReference type="UniProtKB" id="Q04561"/>
    </source>
</evidence>
<evidence type="ECO:0000250" key="7">
    <source>
        <dbReference type="UniProtKB" id="Q9WJB2"/>
    </source>
</evidence>
<evidence type="ECO:0000255" key="8"/>
<evidence type="ECO:0000255" key="9">
    <source>
        <dbReference type="PROSITE-ProRule" id="PRU00539"/>
    </source>
</evidence>
<evidence type="ECO:0000255" key="10">
    <source>
        <dbReference type="PROSITE-ProRule" id="PRU00826"/>
    </source>
</evidence>
<evidence type="ECO:0000255" key="11">
    <source>
        <dbReference type="PROSITE-ProRule" id="PRU00871"/>
    </source>
</evidence>
<evidence type="ECO:0000255" key="12">
    <source>
        <dbReference type="PROSITE-ProRule" id="PRU00872"/>
    </source>
</evidence>
<evidence type="ECO:0000255" key="13">
    <source>
        <dbReference type="PROSITE-ProRule" id="PRU00873"/>
    </source>
</evidence>
<evidence type="ECO:0000255" key="14">
    <source>
        <dbReference type="PROSITE-ProRule" id="PRU00985"/>
    </source>
</evidence>
<evidence type="ECO:0000255" key="15">
    <source>
        <dbReference type="PROSITE-ProRule" id="PRU01292"/>
    </source>
</evidence>
<evidence type="ECO:0000255" key="16">
    <source>
        <dbReference type="PROSITE-ProRule" id="PRU01303"/>
    </source>
</evidence>
<evidence type="ECO:0000255" key="17">
    <source>
        <dbReference type="PROSITE-ProRule" id="PRU01306"/>
    </source>
</evidence>
<evidence type="ECO:0000256" key="18">
    <source>
        <dbReference type="SAM" id="MobiDB-lite"/>
    </source>
</evidence>
<evidence type="ECO:0000305" key="19"/>
<keyword id="KW-0067">ATP-binding</keyword>
<keyword id="KW-0255">Endonuclease</keyword>
<keyword id="KW-0347">Helicase</keyword>
<keyword id="KW-1035">Host cytoplasm</keyword>
<keyword id="KW-1038">Host endoplasmic reticulum</keyword>
<keyword id="KW-1043">Host membrane</keyword>
<keyword id="KW-1048">Host nucleus</keyword>
<keyword id="KW-0945">Host-virus interaction</keyword>
<keyword id="KW-0378">Hydrolase</keyword>
<keyword id="KW-1090">Inhibition of host innate immune response by virus</keyword>
<keyword id="KW-1114">Inhibition of host interferon signaling pathway by virus</keyword>
<keyword id="KW-1095">Inhibition of host ISG15 by virus</keyword>
<keyword id="KW-1100">Inhibition of host NF-kappa-B by virus</keyword>
<keyword id="KW-1102">Inhibition of host PKR by virus</keyword>
<keyword id="KW-1105">Inhibition of host STAT1 by virus</keyword>
<keyword id="KW-0922">Interferon antiviral system evasion</keyword>
<keyword id="KW-0456">Lyase</keyword>
<keyword id="KW-0472">Membrane</keyword>
<keyword id="KW-0479">Metal-binding</keyword>
<keyword id="KW-1127">Modulation of host ubiquitin pathway by viral deubiquitinase</keyword>
<keyword id="KW-1130">Modulation of host ubiquitin pathway by virus</keyword>
<keyword id="KW-0511">Multifunctional enzyme</keyword>
<keyword id="KW-0540">Nuclease</keyword>
<keyword id="KW-0547">Nucleotide-binding</keyword>
<keyword id="KW-0548">Nucleotidyltransferase</keyword>
<keyword id="KW-0645">Protease</keyword>
<keyword id="KW-0688">Ribosomal frameshifting</keyword>
<keyword id="KW-0696">RNA-directed RNA polymerase</keyword>
<keyword id="KW-0720">Serine protease</keyword>
<keyword id="KW-0788">Thiol protease</keyword>
<keyword id="KW-0808">Transferase</keyword>
<keyword id="KW-0812">Transmembrane</keyword>
<keyword id="KW-1133">Transmembrane helix</keyword>
<keyword id="KW-0899">Viral immunoevasion</keyword>
<keyword id="KW-0693">Viral RNA replication</keyword>
<keyword id="KW-0862">Zinc</keyword>
<keyword id="KW-0863">Zinc-finger</keyword>
<comment type="function">
    <molecule>Replicase polyprotein 1ab</molecule>
    <text>Contains the activities necessary for the transcription of negative stranded RNA, leader RNA, subgenomic mRNAs and progeny virion RNA as well as proteinases responsible for the cleavage of the polyprotein into functional products.</text>
</comment>
<comment type="function">
    <molecule>Nsp1-alpha papain-like cysteine proteinase</molecule>
    <text evidence="6">Inhibits host IFN-beta production. Plays a role in the degradation of the host transcriptional activator CREBBP protein. The degradation of host CREBBP which is a key component of the IFN enhanceosome is likely responsible for the inhibition of interferon mediated by Nsp1-alpha. Also participates in the inhibition of host NF-kappa-B activation by counteracting LUBAC-dependent induction of NF-kappa-B. Reduces host NEMO ubiquitination by blocking the interaction between the two LUBAC complex components RNF31 and SHARPIN.</text>
</comment>
<comment type="function">
    <molecule>Nsp1-beta papain-like cysteine proteinase</molecule>
    <text evidence="3 6 7">Plays a role in blocking host mRNA nuclear export to the cytoplasm and subversion of host protein synthesis (By similarity). Additionally, inhibits the interferon-activated JAK/STAT signal transduction by mediating the ubiquitination and subsequent proteasomal degradation of host KPNA1 (By similarity). Repurposes the host antiviral stress granules into a proviral platform to counteract the EIF2AK2/PKR restriction, thereby regulating the host inflammatory response (By similarity).</text>
</comment>
<comment type="function">
    <molecule>Nsp2 cysteine proteinase</molecule>
    <text evidence="2">Multifunctional protein that acts as a viral protease and as a viral antagonist of host immune response. Cleaves the nsp2/nsp3 site in the viral polyprotein. Displays deubiquitinating activity that cleaves both ubiquitinated and ISGylated products and therefore inhibits ubiquitin and ISG15-dependent host innate immunity. Also deubiquinates host NFKBIA, thereby interfering with NFKBIA degradation and impairing subsequent NF-kappa-B activation.</text>
</comment>
<comment type="function">
    <molecule>Non-structural protein 3</molecule>
    <text evidence="6">Plays a role in the inhibition of the immune response by interacting with host IFITM1. This interaction leads to the proteasomal degradation of the IFN-induced antiviral protein IFITM1.</text>
</comment>
<comment type="function">
    <molecule>Serine protease nsp4</molecule>
    <text evidence="6">Cleaves the majority of cleavage sites present in the C-terminus of the polyprotein. Triggers host apoptosis through caspase-3, -8, and -9 activations. Subverts host innate immune responses through its protease activity. Targets the NF-kappa-B essential modulator NEMO and mediates its cleavage. Blocks host interferon beta induction and downstream signaling by cleaving mitochondrial MAVS, dislodging it from the mitochondria. Impairs host defense by cleaving host mRNA-decapping enzyme DCP1A to attenuate its antiviral activity.</text>
</comment>
<comment type="function">
    <molecule>Non-structural protein 5-6-7</molecule>
    <text evidence="6">Plays a role in the initial induction of autophagosomes from host endoplasmic reticulum.</text>
</comment>
<comment type="function">
    <molecule>Non-structural protein 5</molecule>
    <text evidence="6">Plays a role in the inhibition of host STAT3 signaling pathway by inducing the degradation of STAT3.</text>
</comment>
<comment type="function">
    <molecule>RNA-directed RNA polymerase</molecule>
    <text evidence="6">Responsible for replication and transcription of the viral RNA genome.</text>
</comment>
<comment type="function">
    <molecule>Helicase nsp10</molecule>
    <text evidence="6">Displays RNA and DNA duplex-unwinding activities with 5' to 3' polarity.</text>
</comment>
<comment type="function">
    <molecule>Uridylate-specific endoribonuclease nsp11</molecule>
    <text evidence="4 5 6">Plays a role in viral transcription/replication and prevents the simultaneous activation of host cell dsRNA sensors, such as MDA5/IFIH1, OAS, PKR (By similarity) and NLRP3 inflammasome (By similarity). Acts by degrading the 5'-polyuridines generated during replication of the poly(A) region of viral genomic and subgenomic RNAs. Catalyzes a two-step reaction in which a 2'3'-cyclic phosphate (2'3'-cP) is first generated by 2'-O transesterification, which is then hydrolyzed to a 3'-phosphate (3'-P) (By similarity). If not degraded, poly(U) RNA would hybridize with poly(A) RNA tails and activate host dsRNA sensors (By similarity). Also plays a role in the inhibition of host type I interferon production by recruiting host OTULIN to promote removal of linear ubiquitination targeting host NEMO (By similarity).</text>
</comment>
<comment type="catalytic activity">
    <molecule>RNA-directed RNA polymerase</molecule>
    <reaction evidence="9">
        <text>RNA(n) + a ribonucleoside 5'-triphosphate = RNA(n+1) + diphosphate</text>
        <dbReference type="Rhea" id="RHEA:21248"/>
        <dbReference type="Rhea" id="RHEA-COMP:14527"/>
        <dbReference type="Rhea" id="RHEA-COMP:17342"/>
        <dbReference type="ChEBI" id="CHEBI:33019"/>
        <dbReference type="ChEBI" id="CHEBI:61557"/>
        <dbReference type="ChEBI" id="CHEBI:140395"/>
        <dbReference type="EC" id="2.7.7.48"/>
    </reaction>
</comment>
<comment type="catalytic activity">
    <molecule>Helicase nsp10</molecule>
    <reaction evidence="6">
        <text>ATP + H2O = ADP + phosphate + H(+)</text>
        <dbReference type="Rhea" id="RHEA:13065"/>
        <dbReference type="ChEBI" id="CHEBI:15377"/>
        <dbReference type="ChEBI" id="CHEBI:15378"/>
        <dbReference type="ChEBI" id="CHEBI:30616"/>
        <dbReference type="ChEBI" id="CHEBI:43474"/>
        <dbReference type="ChEBI" id="CHEBI:456216"/>
        <dbReference type="EC" id="3.6.4.12"/>
    </reaction>
</comment>
<comment type="catalytic activity">
    <molecule>Helicase nsp10</molecule>
    <reaction evidence="6">
        <text>ATP + H2O = ADP + phosphate + H(+)</text>
        <dbReference type="Rhea" id="RHEA:13065"/>
        <dbReference type="ChEBI" id="CHEBI:15377"/>
        <dbReference type="ChEBI" id="CHEBI:15378"/>
        <dbReference type="ChEBI" id="CHEBI:30616"/>
        <dbReference type="ChEBI" id="CHEBI:43474"/>
        <dbReference type="ChEBI" id="CHEBI:456216"/>
        <dbReference type="EC" id="3.6.4.13"/>
    </reaction>
</comment>
<comment type="catalytic activity">
    <molecule>Nsp2 cysteine proteinase</molecule>
    <reaction evidence="6">
        <text>Thiol-dependent hydrolysis of ester, thioester, amide, peptide and isopeptide bonds formed by the C-terminal Gly of ubiquitin (a 76-residue protein attached to proteins as an intracellular targeting signal).</text>
        <dbReference type="EC" id="3.4.19.12"/>
    </reaction>
</comment>
<comment type="catalytic activity">
    <molecule>Uridylate-specific endoribonuclease nsp11</molecule>
    <reaction evidence="5">
        <text>uridylyl-uridylyl-ribonucleotide-RNA = a 3'-end uridylyl-2',3'-cyclophospho-uridine-RNA + a 5'-end dephospho-ribonucleoside-RNA</text>
        <dbReference type="Rhea" id="RHEA:67732"/>
        <dbReference type="Rhea" id="RHEA-COMP:13936"/>
        <dbReference type="Rhea" id="RHEA-COMP:17334"/>
        <dbReference type="Rhea" id="RHEA-COMP:17335"/>
        <dbReference type="ChEBI" id="CHEBI:138284"/>
        <dbReference type="ChEBI" id="CHEBI:173079"/>
        <dbReference type="ChEBI" id="CHEBI:173080"/>
    </reaction>
</comment>
<comment type="subunit">
    <text evidence="6">Nsp1-alpha papain-like: Interacts with host RNF31.</text>
</comment>
<comment type="subunit">
    <molecule>Nsp1-beta papain-like cysteine proteinase</molecule>
    <text evidence="3">Interacts with host EIF2AK2; this interaction occurs in host stress granules and leads to EIF2AK2 inhibition. Interacts with host G3BP1; this interaction probably plays a role in Nsp1-beta-mediated inhibition of host EIF2AK2.</text>
</comment>
<comment type="subunit">
    <molecule>Nsp2 cysteine proteinase</molecule>
    <text evidence="6">Interacts with host DDX18; this interaction redistributes host DDX18 to the cytoplasm.</text>
</comment>
<comment type="subunit">
    <molecule>Non-structural protein 3</molecule>
    <text evidence="6">Interacts with host IFITM1.</text>
</comment>
<comment type="subunit">
    <molecule>RNA-directed RNA polymerase</molecule>
    <text evidence="6">Interacts with host DDX5.</text>
</comment>
<comment type="subunit">
    <molecule>Helicase nsp10</molecule>
    <text evidence="6">Interacts with host DDX18; this interaction redistributes host DDX18 to the cytoplasm.</text>
</comment>
<comment type="subunit">
    <molecule>Uridylate-specific endoribonuclease nsp11</molecule>
    <text evidence="6">Interacts with host OTULIN.</text>
</comment>
<comment type="subunit">
    <molecule>Non-structural protein 12</molecule>
    <text evidence="6">Interacts with host LGALS3.</text>
</comment>
<comment type="subcellular location">
    <molecule>Nsp1</molecule>
    <subcellularLocation>
        <location evidence="6">Host nucleus</location>
    </subcellularLocation>
    <subcellularLocation>
        <location evidence="6">Host cytoplasm</location>
    </subcellularLocation>
</comment>
<comment type="subcellular location">
    <molecule>Nsp1-alpha papain-like cysteine proteinase</molecule>
    <subcellularLocation>
        <location evidence="6">Host nucleus</location>
    </subcellularLocation>
    <subcellularLocation>
        <location evidence="6">Host cytoplasm</location>
    </subcellularLocation>
</comment>
<comment type="subcellular location">
    <molecule>Nsp1-beta papain-like cysteine proteinase</molecule>
    <subcellularLocation>
        <location evidence="3">Host nucleus</location>
    </subcellularLocation>
    <subcellularLocation>
        <location evidence="3">Host cytoplasm</location>
    </subcellularLocation>
    <text evidence="3">Accumulates mainly in the host cytoplasm in early infection and then mostly in the host nucleus.</text>
</comment>
<comment type="subcellular location">
    <molecule>Nsp2 cysteine proteinase</molecule>
    <subcellularLocation>
        <location evidence="6">Host cytoplasm</location>
    </subcellularLocation>
    <subcellularLocation>
        <location evidence="6">Host membrane</location>
        <topology evidence="6">Multi-pass membrane protein</topology>
    </subcellularLocation>
</comment>
<comment type="subcellular location">
    <molecule>Non-structural protein 5-6-7</molecule>
    <subcellularLocation>
        <location evidence="6">Host endoplasmic reticulum</location>
    </subcellularLocation>
    <subcellularLocation>
        <location evidence="6">Host membrane</location>
        <topology evidence="6">Multi-pass membrane protein</topology>
    </subcellularLocation>
</comment>
<comment type="subcellular location">
    <molecule>Serine protease nsp4</molecule>
    <subcellularLocation>
        <location evidence="6">Host cytoplasm</location>
    </subcellularLocation>
</comment>
<comment type="subcellular location">
    <molecule>RNA-directed RNA polymerase</molecule>
    <subcellularLocation>
        <location evidence="6">Host cytoplasm</location>
    </subcellularLocation>
    <subcellularLocation>
        <location evidence="6">Host cytoplasm</location>
        <location evidence="6">Host perinuclear region</location>
    </subcellularLocation>
</comment>
<comment type="subcellular location">
    <molecule>Helicase nsp10</molecule>
    <subcellularLocation>
        <location evidence="6">Host cytoplasm</location>
    </subcellularLocation>
    <subcellularLocation>
        <location evidence="6">Host cytoplasm</location>
        <location evidence="6">Host perinuclear region</location>
    </subcellularLocation>
</comment>
<comment type="subcellular location">
    <molecule>Uridylate-specific endoribonuclease nsp11</molecule>
    <subcellularLocation>
        <location evidence="6">Host cytoplasm</location>
    </subcellularLocation>
    <subcellularLocation>
        <location evidence="6">Host nucleus</location>
    </subcellularLocation>
</comment>
<comment type="subcellular location">
    <molecule>Non-structural protein 12</molecule>
    <subcellularLocation>
        <location evidence="6">Host cytoplasm</location>
    </subcellularLocation>
</comment>
<comment type="alternative products">
    <event type="ribosomal frameshifting"/>
    <isoform>
        <id>Q8B912-1</id>
        <name>Replicase polyprotein 1ab</name>
        <name>pp1ab</name>
        <sequence type="displayed"/>
    </isoform>
    <isoform>
        <id>Q8B912-2</id>
        <name>Replicase polyprotein 1a</name>
        <name>pp1a</name>
        <name>ORF1a polyprotein</name>
        <sequence type="described" ref="VSP_032891"/>
    </isoform>
</comment>
<comment type="domain">
    <text evidence="1">The hydrophobic domains (HD) could mediate the membrane association of the replication complex and thereby alter the architecture of the host cell membrane.</text>
</comment>
<comment type="domain">
    <text evidence="1">The OTU-like region is responsible for the deubiquitinating and deISGylation activities of Nsp2.</text>
</comment>
<comment type="PTM">
    <molecule>Replicase polyprotein 1ab</molecule>
    <text evidence="7">Specific enzymatic cleavages in vivo by its own proteases yield mature proteins. Nsp1 is autocleaved into two subunits, Nsp1-alpha and Nsp1-beta. There are two alternative pathways for processing. Either nsp4-5 is cleaved, which represents the major pathway or the nsp5-6 and nsp6-7 are processed, which represents the minor pathway. The major pathway occurs when nsp2 acts as a cofactor for nsp4.</text>
</comment>
<comment type="miscellaneous">
    <molecule>Isoform Replicase polyprotein 1ab</molecule>
    <text>Produced by -1 ribosomal frameshifting at the 1a-1b genes boundary.</text>
</comment>
<comment type="miscellaneous">
    <molecule>Isoform Replicase polyprotein 1a</molecule>
    <text evidence="19">Produced by conventional translation.</text>
</comment>
<comment type="similarity">
    <text evidence="19">Belongs to the arteriviridae polyprotein family.</text>
</comment>
<comment type="sequence caution" evidence="19">
    <conflict type="erroneous initiation">
        <sequence resource="EMBL-CDS" id="AAN73221"/>
    </conflict>
</comment>
<feature type="chain" id="PRO_0000036670" description="Replicase polyprotein 1ab">
    <location>
        <begin position="1"/>
        <end position="3961"/>
    </location>
</feature>
<feature type="chain" id="PRO_0000410827" description="Nsp1" evidence="1">
    <location>
        <begin position="1"/>
        <end position="382"/>
    </location>
</feature>
<feature type="chain" id="PRO_0000036672" description="Nsp1-alpha papain-like cysteine proteinase" evidence="8">
    <location>
        <begin position="1"/>
        <end position="180"/>
    </location>
</feature>
<feature type="chain" id="PRO_0000036673" description="Nsp1-beta papain-like cysteine proteinase" evidence="1">
    <location>
        <begin position="181"/>
        <end position="383"/>
    </location>
</feature>
<feature type="chain" id="PRO_0000036674" description="Nsp2 cysteine proteinase" evidence="1">
    <location>
        <begin position="384"/>
        <end position="1579"/>
    </location>
</feature>
<feature type="chain" id="PRO_0000036675" description="Non-structural protein 3" evidence="1">
    <location>
        <begin position="1580"/>
        <end position="1809"/>
    </location>
</feature>
<feature type="chain" id="PRO_0000036676" description="Serine protease nsp4" evidence="1">
    <location>
        <begin position="1810"/>
        <end position="2013"/>
    </location>
</feature>
<feature type="chain" id="PRO_0000036677" description="Non-structural protein 5-6-7" evidence="1">
    <location>
        <begin position="2014"/>
        <end position="2458"/>
    </location>
</feature>
<feature type="chain" id="PRO_0000423122" description="Non-structural protein 5" evidence="1">
    <location>
        <begin position="2014"/>
        <end position="2183"/>
    </location>
</feature>
<feature type="chain" id="PRO_0000423123" description="Non-structural protein 6" evidence="1">
    <location>
        <begin position="2184"/>
        <end position="2199"/>
    </location>
</feature>
<feature type="chain" id="PRO_0000423124" description="Non-structural protein 7-alpha" evidence="1">
    <location>
        <begin position="2200"/>
        <end position="2348"/>
    </location>
</feature>
<feature type="chain" id="PRO_0000423125" description="Non-structural protein 7-beta" evidence="1">
    <location>
        <begin position="2349"/>
        <end position="2458"/>
    </location>
</feature>
<feature type="chain" id="PRO_0000036678" description="RNA-directed RNA polymerase" evidence="1">
    <location>
        <begin position="2459"/>
        <end position="3144"/>
    </location>
</feature>
<feature type="chain" id="PRO_0000036679" description="Non-structural protein 8" evidence="1">
    <location>
        <begin position="2459"/>
        <end position="2503"/>
    </location>
</feature>
<feature type="chain" id="PRO_0000036680" description="Helicase nsp10" evidence="1">
    <location>
        <begin position="3145"/>
        <end position="3585"/>
    </location>
</feature>
<feature type="chain" id="PRO_0000036681" description="Uridylate-specific endoribonuclease nsp11" evidence="1">
    <location>
        <begin position="3586"/>
        <end position="3808"/>
    </location>
</feature>
<feature type="chain" id="PRO_0000036682" description="Non-structural protein 12" evidence="1">
    <location>
        <begin position="3809"/>
        <end position="3961"/>
    </location>
</feature>
<feature type="transmembrane region" description="Helical" evidence="8">
    <location>
        <begin position="1266"/>
        <end position="1286"/>
    </location>
</feature>
<feature type="transmembrane region" description="Helical" evidence="8">
    <location>
        <begin position="1296"/>
        <end position="1316"/>
    </location>
</feature>
<feature type="transmembrane region" description="Helical" evidence="8">
    <location>
        <begin position="1368"/>
        <end position="1388"/>
    </location>
</feature>
<feature type="transmembrane region" description="Helical" evidence="8">
    <location>
        <begin position="1583"/>
        <end position="1603"/>
    </location>
</feature>
<feature type="transmembrane region" description="Helical" evidence="8">
    <location>
        <begin position="1648"/>
        <end position="1668"/>
    </location>
</feature>
<feature type="transmembrane region" description="Helical" evidence="8">
    <location>
        <begin position="1685"/>
        <end position="1705"/>
    </location>
</feature>
<feature type="transmembrane region" description="Helical" evidence="8">
    <location>
        <begin position="1719"/>
        <end position="1739"/>
    </location>
</feature>
<feature type="transmembrane region" description="Helical" evidence="8">
    <location>
        <begin position="2036"/>
        <end position="2056"/>
    </location>
</feature>
<feature type="transmembrane region" description="Helical" evidence="8">
    <location>
        <begin position="2060"/>
        <end position="2080"/>
    </location>
</feature>
<feature type="transmembrane region" description="Helical" evidence="8">
    <location>
        <begin position="2092"/>
        <end position="2112"/>
    </location>
</feature>
<feature type="transmembrane region" description="Helical" evidence="8">
    <location>
        <begin position="2137"/>
        <end position="2157"/>
    </location>
</feature>
<feature type="transmembrane region" description="Helical" evidence="8">
    <location>
        <begin position="2162"/>
        <end position="2182"/>
    </location>
</feature>
<feature type="domain" description="Peptidase C31" evidence="12">
    <location>
        <begin position="69"/>
        <end position="180"/>
    </location>
</feature>
<feature type="domain" description="Peptidase C32" evidence="13">
    <location>
        <begin position="263"/>
        <end position="383"/>
    </location>
</feature>
<feature type="domain" description="Peptidase C33" evidence="11">
    <location>
        <begin position="428"/>
        <end position="535"/>
    </location>
</feature>
<feature type="domain" description="Peptidase S32" evidence="10">
    <location>
        <begin position="1810"/>
        <end position="2013"/>
    </location>
</feature>
<feature type="domain" description="NiRAN" evidence="15">
    <location>
        <begin position="2488"/>
        <end position="2651"/>
    </location>
</feature>
<feature type="domain" description="RdRp catalytic" evidence="9">
    <location>
        <begin position="2890"/>
        <end position="3024"/>
    </location>
</feature>
<feature type="domain" description="AV ZBD" evidence="14">
    <location>
        <begin position="3145"/>
        <end position="3208"/>
    </location>
</feature>
<feature type="domain" description="(+)RNA virus helicase ATP-binding">
    <location>
        <begin position="3265"/>
        <end position="3417"/>
    </location>
</feature>
<feature type="domain" description="(+)RNA virus helicase C-terminal">
    <location>
        <begin position="3418"/>
        <end position="3546"/>
    </location>
</feature>
<feature type="domain" description="AV-Nsp11N/CoV-Nsp15M" evidence="17">
    <location>
        <begin position="3585"/>
        <end position="3681"/>
    </location>
</feature>
<feature type="domain" description="NendoU" evidence="16">
    <location>
        <begin position="3683"/>
        <end position="3805"/>
    </location>
</feature>
<feature type="zinc finger region" description="C4-type; atypical">
    <location>
        <begin position="8"/>
        <end position="28"/>
    </location>
</feature>
<feature type="region of interest" description="PCP1-alpha">
    <location>
        <begin position="69"/>
        <end position="182"/>
    </location>
</feature>
<feature type="region of interest" description="Important for host EIF2AK2 inhibition" evidence="3">
    <location>
        <begin position="199"/>
        <end position="200"/>
    </location>
</feature>
<feature type="region of interest" description="PCP1-beta">
    <location>
        <begin position="263"/>
        <end position="382"/>
    </location>
</feature>
<feature type="region of interest" description="OTU-like">
    <location>
        <begin position="426"/>
        <end position="513"/>
    </location>
</feature>
<feature type="region of interest" description="Disordered" evidence="18">
    <location>
        <begin position="810"/>
        <end position="875"/>
    </location>
</feature>
<feature type="region of interest" description="Disordered" evidence="18">
    <location>
        <begin position="899"/>
        <end position="918"/>
    </location>
</feature>
<feature type="region of interest" description="Disordered" evidence="18">
    <location>
        <begin position="1148"/>
        <end position="1191"/>
    </location>
</feature>
<feature type="region of interest" description="HD1">
    <location>
        <begin position="1266"/>
        <end position="1388"/>
    </location>
</feature>
<feature type="region of interest" description="HD2">
    <location>
        <begin position="1583"/>
        <end position="1745"/>
    </location>
</feature>
<feature type="region of interest" description="HD3">
    <location>
        <begin position="2036"/>
        <end position="2157"/>
    </location>
</feature>
<feature type="compositionally biased region" description="Pro residues" evidence="18">
    <location>
        <begin position="810"/>
        <end position="819"/>
    </location>
</feature>
<feature type="active site" description="For Nsp1-alpha papain-like cysteine proteinase activity" evidence="12">
    <location>
        <position position="76"/>
    </location>
</feature>
<feature type="active site" description="For Nsp1-alpha papain-like cysteine proteinase activity" evidence="12">
    <location>
        <position position="146"/>
    </location>
</feature>
<feature type="active site" description="For Nsp1-beta papain-like cysteine proteinase activity" evidence="13">
    <location>
        <position position="270"/>
    </location>
</feature>
<feature type="active site" description="For Nsp1-beta papain-like cysteine proteinase activity" evidence="13">
    <location>
        <position position="339"/>
    </location>
</feature>
<feature type="active site" description="For Nsp2 cysteine proteinase activity" evidence="11">
    <location>
        <position position="437"/>
    </location>
</feature>
<feature type="active site" description="For Nsp2 cysteine proteinase activity" evidence="11">
    <location>
        <position position="506"/>
    </location>
</feature>
<feature type="active site" description="Charge relay system; for 3C-like serine proteinase activity" evidence="10">
    <location>
        <position position="1848"/>
    </location>
</feature>
<feature type="active site" description="Charge relay system; for 3C-like serine proteinase activity" evidence="10">
    <location>
        <position position="1873"/>
    </location>
</feature>
<feature type="active site" description="Charge relay system; for 3C-like serine proteinase activity" evidence="10">
    <location>
        <position position="1927"/>
    </location>
</feature>
<feature type="active site" evidence="16">
    <location>
        <position position="3714"/>
    </location>
</feature>
<feature type="active site" evidence="16">
    <location>
        <position position="3729"/>
    </location>
</feature>
<feature type="active site" evidence="16">
    <location>
        <position position="3758"/>
    </location>
</feature>
<feature type="binding site" evidence="14">
    <location>
        <position position="3151"/>
    </location>
    <ligand>
        <name>Zn(2+)</name>
        <dbReference type="ChEBI" id="CHEBI:29105"/>
        <label>1</label>
    </ligand>
</feature>
<feature type="binding site" evidence="14">
    <location>
        <position position="3154"/>
    </location>
    <ligand>
        <name>Zn(2+)</name>
        <dbReference type="ChEBI" id="CHEBI:29105"/>
        <label>1</label>
    </ligand>
</feature>
<feature type="binding site" evidence="14">
    <location>
        <position position="3164"/>
    </location>
    <ligand>
        <name>Zn(2+)</name>
        <dbReference type="ChEBI" id="CHEBI:29105"/>
        <label>2</label>
    </ligand>
</feature>
<feature type="binding site" evidence="14">
    <location>
        <position position="3169"/>
    </location>
    <ligand>
        <name>Zn(2+)</name>
        <dbReference type="ChEBI" id="CHEBI:29105"/>
        <label>1</label>
    </ligand>
</feature>
<feature type="binding site" evidence="14">
    <location>
        <position position="3172"/>
    </location>
    <ligand>
        <name>Zn(2+)</name>
        <dbReference type="ChEBI" id="CHEBI:29105"/>
        <label>1</label>
    </ligand>
</feature>
<feature type="binding site" evidence="14">
    <location>
        <position position="3174"/>
    </location>
    <ligand>
        <name>Zn(2+)</name>
        <dbReference type="ChEBI" id="CHEBI:29105"/>
        <label>2</label>
    </ligand>
</feature>
<feature type="binding site" evidence="14">
    <location>
        <position position="3176"/>
    </location>
    <ligand>
        <name>Zn(2+)</name>
        <dbReference type="ChEBI" id="CHEBI:29105"/>
        <label>2</label>
    </ligand>
</feature>
<feature type="binding site" evidence="14">
    <location>
        <position position="3178"/>
    </location>
    <ligand>
        <name>Zn(2+)</name>
        <dbReference type="ChEBI" id="CHEBI:29105"/>
        <label>2</label>
    </ligand>
</feature>
<feature type="binding site" evidence="14">
    <location>
        <position position="3185"/>
    </location>
    <ligand>
        <name>Zn(2+)</name>
        <dbReference type="ChEBI" id="CHEBI:29105"/>
        <label>3</label>
    </ligand>
</feature>
<feature type="binding site" evidence="14">
    <location>
        <position position="3187"/>
    </location>
    <ligand>
        <name>Zn(2+)</name>
        <dbReference type="ChEBI" id="CHEBI:29105"/>
        <label>3</label>
    </ligand>
</feature>
<feature type="binding site" evidence="14">
    <location>
        <position position="3194"/>
    </location>
    <ligand>
        <name>Zn(2+)</name>
        <dbReference type="ChEBI" id="CHEBI:29105"/>
        <label>3</label>
    </ligand>
</feature>
<feature type="binding site" evidence="14">
    <location>
        <position position="3197"/>
    </location>
    <ligand>
        <name>Zn(2+)</name>
        <dbReference type="ChEBI" id="CHEBI:29105"/>
        <label>3</label>
    </ligand>
</feature>
<feature type="binding site" evidence="1">
    <location>
        <begin position="3293"/>
        <end position="3300"/>
    </location>
    <ligand>
        <name>ATP</name>
        <dbReference type="ChEBI" id="CHEBI:30616"/>
    </ligand>
</feature>
<feature type="site" description="Cleavage; by autolysis" evidence="7">
    <location>
        <begin position="180"/>
        <end position="181"/>
    </location>
</feature>
<feature type="site" description="Cleavage; by autolysis" evidence="1">
    <location>
        <begin position="383"/>
        <end position="384"/>
    </location>
</feature>
<feature type="site" description="Cleavage; by CP2" evidence="2">
    <location>
        <begin position="1579"/>
        <end position="1580"/>
    </location>
</feature>
<feature type="site" description="Cleavage; by 3CLSP" evidence="2">
    <location>
        <begin position="1809"/>
        <end position="1810"/>
    </location>
</feature>
<feature type="site" description="Cleavage; by 3CLSP" evidence="2">
    <location>
        <begin position="2013"/>
        <end position="2014"/>
    </location>
</feature>
<feature type="site" description="Cleavage; by 3CLSP" evidence="2">
    <location>
        <begin position="2183"/>
        <end position="2184"/>
    </location>
</feature>
<feature type="site" description="Cleavage; by 3CLSP" evidence="2">
    <location>
        <begin position="2199"/>
        <end position="2200"/>
    </location>
</feature>
<feature type="site" description="Cleavage; by 3CLSP" evidence="2">
    <location>
        <begin position="2348"/>
        <end position="2349"/>
    </location>
</feature>
<feature type="site" description="Cleavage; by 3CLSP" evidence="2">
    <location>
        <begin position="2458"/>
        <end position="2459"/>
    </location>
</feature>
<feature type="site" description="Cleavage; by 3CLSP" evidence="2">
    <location>
        <begin position="2503"/>
        <end position="2504"/>
    </location>
</feature>
<feature type="site" description="Cleavage; by 3CLSP" evidence="2">
    <location>
        <begin position="3144"/>
        <end position="3145"/>
    </location>
</feature>
<feature type="site" description="Cleavage; by 3CLSP" evidence="1">
    <location>
        <begin position="3585"/>
        <end position="3586"/>
    </location>
</feature>
<feature type="site" description="Cleavage; by 3CLSP" evidence="1">
    <location>
        <begin position="3808"/>
        <end position="3809"/>
    </location>
</feature>
<feature type="splice variant" id="VSP_032891" description="In isoform Replicase polyprotein 1a." evidence="19">
    <location>
        <begin position="2504"/>
        <end position="3961"/>
    </location>
</feature>
<organism>
    <name type="scientific">Porcine reproductive and respiratory syndrome virus (strain HB-1)</name>
    <name type="common">PRRSV</name>
    <dbReference type="NCBI Taxonomy" id="300563"/>
    <lineage>
        <taxon>Viruses</taxon>
        <taxon>Riboviria</taxon>
        <taxon>Orthornavirae</taxon>
        <taxon>Pisuviricota</taxon>
        <taxon>Pisoniviricetes</taxon>
        <taxon>Nidovirales</taxon>
        <taxon>Arnidovirineae</taxon>
        <taxon>Arteriviridae</taxon>
        <taxon>Variarterivirinae</taxon>
        <taxon>Betaarterivirus</taxon>
        <taxon>Ampobartevirus</taxon>
        <taxon>Betaarterivirus americense</taxon>
    </lineage>
</organism>
<proteinExistence type="evidence at transcript level"/>
<name>RPOA_PRRSB</name>
<organismHost>
    <name type="scientific">Sus scrofa</name>
    <name type="common">Pig</name>
    <dbReference type="NCBI Taxonomy" id="9823"/>
</organismHost>
<dbReference type="EC" id="3.4.22.-"/>
<dbReference type="EC" id="3.4.19.12"/>
<dbReference type="EC" id="3.4.21.-"/>
<dbReference type="EC" id="2.7.7.48"/>
<dbReference type="EC" id="3.6.4.12"/>
<dbReference type="EC" id="3.6.4.13"/>
<dbReference type="EC" id="4.6.1.-"/>
<dbReference type="EMBL" id="AY150312">
    <property type="protein sequence ID" value="AAN73220.1"/>
    <property type="molecule type" value="mRNA"/>
</dbReference>
<dbReference type="EMBL" id="AY150312">
    <property type="protein sequence ID" value="AAN73221.1"/>
    <property type="status" value="ALT_INIT"/>
    <property type="molecule type" value="mRNA"/>
</dbReference>
<dbReference type="SMR" id="Q8B912"/>
<dbReference type="MEROPS" id="S32.002"/>
<dbReference type="ABCD" id="Q8B912">
    <property type="antibodies" value="8 sequenced antibodies"/>
</dbReference>
<dbReference type="Proteomes" id="UP000124990">
    <property type="component" value="Genome"/>
</dbReference>
<dbReference type="GO" id="GO:0044165">
    <property type="term" value="C:host cell endoplasmic reticulum"/>
    <property type="evidence" value="ECO:0007669"/>
    <property type="project" value="UniProtKB-SubCell"/>
</dbReference>
<dbReference type="GO" id="GO:0033644">
    <property type="term" value="C:host cell membrane"/>
    <property type="evidence" value="ECO:0007669"/>
    <property type="project" value="UniProtKB-SubCell"/>
</dbReference>
<dbReference type="GO" id="GO:0042025">
    <property type="term" value="C:host cell nucleus"/>
    <property type="evidence" value="ECO:0007669"/>
    <property type="project" value="UniProtKB-SubCell"/>
</dbReference>
<dbReference type="GO" id="GO:0044220">
    <property type="term" value="C:host cell perinuclear region of cytoplasm"/>
    <property type="evidence" value="ECO:0007669"/>
    <property type="project" value="UniProtKB-SubCell"/>
</dbReference>
<dbReference type="GO" id="GO:0016020">
    <property type="term" value="C:membrane"/>
    <property type="evidence" value="ECO:0007669"/>
    <property type="project" value="UniProtKB-KW"/>
</dbReference>
<dbReference type="GO" id="GO:0005524">
    <property type="term" value="F:ATP binding"/>
    <property type="evidence" value="ECO:0007669"/>
    <property type="project" value="UniProtKB-KW"/>
</dbReference>
<dbReference type="GO" id="GO:0016887">
    <property type="term" value="F:ATP hydrolysis activity"/>
    <property type="evidence" value="ECO:0007669"/>
    <property type="project" value="RHEA"/>
</dbReference>
<dbReference type="GO" id="GO:0004843">
    <property type="term" value="F:cysteine-type deubiquitinase activity"/>
    <property type="evidence" value="ECO:0007669"/>
    <property type="project" value="UniProtKB-EC"/>
</dbReference>
<dbReference type="GO" id="GO:0004197">
    <property type="term" value="F:cysteine-type endopeptidase activity"/>
    <property type="evidence" value="ECO:0007669"/>
    <property type="project" value="InterPro"/>
</dbReference>
<dbReference type="GO" id="GO:0004519">
    <property type="term" value="F:endonuclease activity"/>
    <property type="evidence" value="ECO:0007669"/>
    <property type="project" value="UniProtKB-KW"/>
</dbReference>
<dbReference type="GO" id="GO:0016829">
    <property type="term" value="F:lyase activity"/>
    <property type="evidence" value="ECO:0007669"/>
    <property type="project" value="UniProtKB-KW"/>
</dbReference>
<dbReference type="GO" id="GO:0030291">
    <property type="term" value="F:protein serine/threonine kinase inhibitor activity"/>
    <property type="evidence" value="ECO:0007669"/>
    <property type="project" value="UniProtKB-KW"/>
</dbReference>
<dbReference type="GO" id="GO:0003723">
    <property type="term" value="F:RNA binding"/>
    <property type="evidence" value="ECO:0007669"/>
    <property type="project" value="InterPro"/>
</dbReference>
<dbReference type="GO" id="GO:0003724">
    <property type="term" value="F:RNA helicase activity"/>
    <property type="evidence" value="ECO:0007669"/>
    <property type="project" value="UniProtKB-EC"/>
</dbReference>
<dbReference type="GO" id="GO:0004540">
    <property type="term" value="F:RNA nuclease activity"/>
    <property type="evidence" value="ECO:0007669"/>
    <property type="project" value="UniProtKB-ARBA"/>
</dbReference>
<dbReference type="GO" id="GO:0003968">
    <property type="term" value="F:RNA-directed RNA polymerase activity"/>
    <property type="evidence" value="ECO:0007669"/>
    <property type="project" value="UniProtKB-KW"/>
</dbReference>
<dbReference type="GO" id="GO:0004252">
    <property type="term" value="F:serine-type endopeptidase activity"/>
    <property type="evidence" value="ECO:0007669"/>
    <property type="project" value="InterPro"/>
</dbReference>
<dbReference type="GO" id="GO:0008270">
    <property type="term" value="F:zinc ion binding"/>
    <property type="evidence" value="ECO:0007669"/>
    <property type="project" value="UniProtKB-KW"/>
</dbReference>
<dbReference type="GO" id="GO:0006351">
    <property type="term" value="P:DNA-templated transcription"/>
    <property type="evidence" value="ECO:0007669"/>
    <property type="project" value="InterPro"/>
</dbReference>
<dbReference type="GO" id="GO:0006508">
    <property type="term" value="P:proteolysis"/>
    <property type="evidence" value="ECO:0007669"/>
    <property type="project" value="UniProtKB-KW"/>
</dbReference>
<dbReference type="GO" id="GO:0039648">
    <property type="term" value="P:symbiont-mediated perturbation of host ubiquitin-like protein modification"/>
    <property type="evidence" value="ECO:0007669"/>
    <property type="project" value="UniProtKB-KW"/>
</dbReference>
<dbReference type="GO" id="GO:0039579">
    <property type="term" value="P:symbiont-mediated suppression of host ISG15-protein conjugation"/>
    <property type="evidence" value="ECO:0007669"/>
    <property type="project" value="UniProtKB-KW"/>
</dbReference>
<dbReference type="GO" id="GO:0039563">
    <property type="term" value="P:symbiont-mediated suppression of host JAK-STAT cascade via inhibition of STAT1 activity"/>
    <property type="evidence" value="ECO:0007669"/>
    <property type="project" value="UniProtKB-KW"/>
</dbReference>
<dbReference type="GO" id="GO:0085034">
    <property type="term" value="P:symbiont-mediated suppression of host NF-kappaB cascade"/>
    <property type="evidence" value="ECO:0007669"/>
    <property type="project" value="UniProtKB-KW"/>
</dbReference>
<dbReference type="GO" id="GO:0039580">
    <property type="term" value="P:symbiont-mediated suppression of host PKR/eIFalpha signaling"/>
    <property type="evidence" value="ECO:0007669"/>
    <property type="project" value="UniProtKB-KW"/>
</dbReference>
<dbReference type="GO" id="GO:0039502">
    <property type="term" value="P:symbiont-mediated suppression of host type I interferon-mediated signaling pathway"/>
    <property type="evidence" value="ECO:0007669"/>
    <property type="project" value="UniProtKB-KW"/>
</dbReference>
<dbReference type="GO" id="GO:0019082">
    <property type="term" value="P:viral protein processing"/>
    <property type="evidence" value="ECO:0007669"/>
    <property type="project" value="InterPro"/>
</dbReference>
<dbReference type="GO" id="GO:0039694">
    <property type="term" value="P:viral RNA genome replication"/>
    <property type="evidence" value="ECO:0007669"/>
    <property type="project" value="InterPro"/>
</dbReference>
<dbReference type="GO" id="GO:0075523">
    <property type="term" value="P:viral translational frameshifting"/>
    <property type="evidence" value="ECO:0007669"/>
    <property type="project" value="UniProtKB-KW"/>
</dbReference>
<dbReference type="CDD" id="cd21410">
    <property type="entry name" value="1B_av_Nsp10-like"/>
    <property type="match status" value="1"/>
</dbReference>
<dbReference type="CDD" id="cd23189">
    <property type="entry name" value="Arteriviridae_RdRp"/>
    <property type="match status" value="1"/>
</dbReference>
<dbReference type="CDD" id="cd22528">
    <property type="entry name" value="av_Nsp3_ER-remodelling"/>
    <property type="match status" value="1"/>
</dbReference>
<dbReference type="CDD" id="cd17937">
    <property type="entry name" value="DEXXYc_viral_SF1-N"/>
    <property type="match status" value="1"/>
</dbReference>
<dbReference type="CDD" id="cd21160">
    <property type="entry name" value="NendoU_av_Nsp11-like"/>
    <property type="match status" value="1"/>
</dbReference>
<dbReference type="CDD" id="cd21166">
    <property type="entry name" value="NTD_av_Nsp11-like"/>
    <property type="match status" value="1"/>
</dbReference>
<dbReference type="CDD" id="cd18786">
    <property type="entry name" value="SF1_C"/>
    <property type="match status" value="1"/>
</dbReference>
<dbReference type="CDD" id="cd21405">
    <property type="entry name" value="ZBD_av_Nsp10-like"/>
    <property type="match status" value="1"/>
</dbReference>
<dbReference type="Gene3D" id="3.90.70.160">
    <property type="match status" value="1"/>
</dbReference>
<dbReference type="Gene3D" id="4.10.80.390">
    <property type="match status" value="1"/>
</dbReference>
<dbReference type="Gene3D" id="3.30.1330.220">
    <property type="entry name" value="Arterivirus nonstructural protein 7 alpha"/>
    <property type="match status" value="1"/>
</dbReference>
<dbReference type="Gene3D" id="2.30.31.30">
    <property type="entry name" value="Arterivirus nps1beta, nuclease domain"/>
    <property type="match status" value="1"/>
</dbReference>
<dbReference type="Gene3D" id="3.90.70.70">
    <property type="entry name" value="Arterivirus papain-like cysteine protease beta domain"/>
    <property type="match status" value="1"/>
</dbReference>
<dbReference type="Gene3D" id="3.30.40.20">
    <property type="entry name" value="Chymotrypsin-like serine protease, domain 3"/>
    <property type="match status" value="1"/>
</dbReference>
<dbReference type="Gene3D" id="3.40.50.300">
    <property type="entry name" value="P-loop containing nucleotide triphosphate hydrolases"/>
    <property type="match status" value="2"/>
</dbReference>
<dbReference type="Gene3D" id="3.90.70.60">
    <property type="entry name" value="Porcine arterivirus-type cysteine proteinase alpha domain"/>
    <property type="match status" value="1"/>
</dbReference>
<dbReference type="Gene3D" id="2.40.10.10">
    <property type="entry name" value="Trypsin-like serine proteases"/>
    <property type="match status" value="2"/>
</dbReference>
<dbReference type="InterPro" id="IPR027351">
    <property type="entry name" value="(+)RNA_virus_helicase_core_dom"/>
</dbReference>
<dbReference type="InterPro" id="IPR031932">
    <property type="entry name" value="Arteri_nsp7a"/>
</dbReference>
<dbReference type="InterPro" id="IPR038451">
    <property type="entry name" value="Arteri_nsp7a_sf"/>
</dbReference>
<dbReference type="InterPro" id="IPR008743">
    <property type="entry name" value="Arterivirus_Nsp2_C33"/>
</dbReference>
<dbReference type="InterPro" id="IPR023338">
    <property type="entry name" value="Arterivirus_NSP4_peptidase"/>
</dbReference>
<dbReference type="InterPro" id="IPR046440">
    <property type="entry name" value="AV_NSP11N_COV_NSP15M"/>
</dbReference>
<dbReference type="InterPro" id="IPR008741">
    <property type="entry name" value="AV_PCPalpha"/>
</dbReference>
<dbReference type="InterPro" id="IPR038155">
    <property type="entry name" value="AV_PCPalpha_sf"/>
</dbReference>
<dbReference type="InterPro" id="IPR025773">
    <property type="entry name" value="AV_PCPbeta"/>
</dbReference>
<dbReference type="InterPro" id="IPR038154">
    <property type="entry name" value="AV_PCPbeta_sf"/>
</dbReference>
<dbReference type="InterPro" id="IPR023183">
    <property type="entry name" value="Chymotrypsin-like_C"/>
</dbReference>
<dbReference type="InterPro" id="IPR043502">
    <property type="entry name" value="DNA/RNA_pol_sf"/>
</dbReference>
<dbReference type="InterPro" id="IPR008760">
    <property type="entry name" value="EAV_peptidase_S32"/>
</dbReference>
<dbReference type="InterPro" id="IPR037227">
    <property type="entry name" value="EndoU-like"/>
</dbReference>
<dbReference type="InterPro" id="IPR043609">
    <property type="entry name" value="NendoU_nidovirus"/>
</dbReference>
<dbReference type="InterPro" id="IPR044863">
    <property type="entry name" value="NIRAN"/>
</dbReference>
<dbReference type="InterPro" id="IPR044348">
    <property type="entry name" value="NSP10_1B_Av"/>
</dbReference>
<dbReference type="InterPro" id="IPR027355">
    <property type="entry name" value="NSP10_Av_ZBD"/>
</dbReference>
<dbReference type="InterPro" id="IPR044320">
    <property type="entry name" value="NSP11_Av_N"/>
</dbReference>
<dbReference type="InterPro" id="IPR044314">
    <property type="entry name" value="NSP11_NendoU_Av"/>
</dbReference>
<dbReference type="InterPro" id="IPR054104">
    <property type="entry name" value="Nsp1alpha_Znf"/>
</dbReference>
<dbReference type="InterPro" id="IPR032855">
    <property type="entry name" value="NSP2-B_epitope"/>
</dbReference>
<dbReference type="InterPro" id="IPR027417">
    <property type="entry name" value="P-loop_NTPase"/>
</dbReference>
<dbReference type="InterPro" id="IPR032785">
    <property type="entry name" value="Pdase_C33_assoc"/>
</dbReference>
<dbReference type="InterPro" id="IPR009003">
    <property type="entry name" value="Peptidase_S1_PA"/>
</dbReference>
<dbReference type="InterPro" id="IPR043504">
    <property type="entry name" value="Peptidase_S1_PA_chymotrypsin"/>
</dbReference>
<dbReference type="InterPro" id="IPR001205">
    <property type="entry name" value="RNA-dir_pol_C"/>
</dbReference>
<dbReference type="InterPro" id="IPR007094">
    <property type="entry name" value="RNA-dir_pol_PSvirus"/>
</dbReference>
<dbReference type="Pfam" id="PF16749">
    <property type="entry name" value="Arteri_nsp7a"/>
    <property type="match status" value="1"/>
</dbReference>
<dbReference type="Pfam" id="PF19215">
    <property type="entry name" value="CoV_NSP15_C"/>
    <property type="match status" value="1"/>
</dbReference>
<dbReference type="Pfam" id="PF14757">
    <property type="entry name" value="NSP2-B_epitope"/>
    <property type="match status" value="1"/>
</dbReference>
<dbReference type="Pfam" id="PF14756">
    <property type="entry name" value="Pdase_C33_assoc"/>
    <property type="match status" value="1"/>
</dbReference>
<dbReference type="Pfam" id="PF05410">
    <property type="entry name" value="Peptidase_C31"/>
    <property type="match status" value="1"/>
</dbReference>
<dbReference type="Pfam" id="PF05411">
    <property type="entry name" value="Peptidase_C32"/>
    <property type="match status" value="1"/>
</dbReference>
<dbReference type="Pfam" id="PF05412">
    <property type="entry name" value="Peptidase_C33"/>
    <property type="match status" value="1"/>
</dbReference>
<dbReference type="Pfam" id="PF05579">
    <property type="entry name" value="Peptidase_S32"/>
    <property type="match status" value="1"/>
</dbReference>
<dbReference type="Pfam" id="PF22049">
    <property type="entry name" value="PRRSV-NSP11_N"/>
    <property type="match status" value="1"/>
</dbReference>
<dbReference type="Pfam" id="PF00680">
    <property type="entry name" value="RdRP_1"/>
    <property type="match status" value="1"/>
</dbReference>
<dbReference type="Pfam" id="PF01443">
    <property type="entry name" value="Viral_helicase1"/>
    <property type="match status" value="1"/>
</dbReference>
<dbReference type="Pfam" id="PF21905">
    <property type="entry name" value="Zf-Nsp1alpha"/>
    <property type="match status" value="1"/>
</dbReference>
<dbReference type="SUPFAM" id="SSF56672">
    <property type="entry name" value="DNA/RNA polymerases"/>
    <property type="match status" value="1"/>
</dbReference>
<dbReference type="SUPFAM" id="SSF142877">
    <property type="entry name" value="EndoU-like"/>
    <property type="match status" value="1"/>
</dbReference>
<dbReference type="SUPFAM" id="SSF52540">
    <property type="entry name" value="P-loop containing nucleoside triphosphate hydrolases"/>
    <property type="match status" value="1"/>
</dbReference>
<dbReference type="SUPFAM" id="SSF50494">
    <property type="entry name" value="Trypsin-like serine proteases"/>
    <property type="match status" value="1"/>
</dbReference>
<dbReference type="PROSITE" id="PS51538">
    <property type="entry name" value="AV_CP"/>
    <property type="match status" value="1"/>
</dbReference>
<dbReference type="PROSITE" id="PS51961">
    <property type="entry name" value="AV_NSP11N_COV_NSP15M"/>
    <property type="match status" value="1"/>
</dbReference>
<dbReference type="PROSITE" id="PS51493">
    <property type="entry name" value="AV_NSP4_PRO"/>
    <property type="match status" value="1"/>
</dbReference>
<dbReference type="PROSITE" id="PS51539">
    <property type="entry name" value="AV_PCP_ALPHA"/>
    <property type="match status" value="1"/>
</dbReference>
<dbReference type="PROSITE" id="PS51540">
    <property type="entry name" value="AV_PCP_BETA"/>
    <property type="match status" value="1"/>
</dbReference>
<dbReference type="PROSITE" id="PS51652">
    <property type="entry name" value="AV_ZBD"/>
    <property type="match status" value="1"/>
</dbReference>
<dbReference type="PROSITE" id="PS51958">
    <property type="entry name" value="NENDOU"/>
    <property type="match status" value="1"/>
</dbReference>
<dbReference type="PROSITE" id="PS51947">
    <property type="entry name" value="NIRAN"/>
    <property type="match status" value="1"/>
</dbReference>
<dbReference type="PROSITE" id="PS51657">
    <property type="entry name" value="PSRV_HELICASE"/>
    <property type="match status" value="1"/>
</dbReference>
<dbReference type="PROSITE" id="PS50507">
    <property type="entry name" value="RDRP_SSRNA_POS"/>
    <property type="match status" value="1"/>
</dbReference>
<protein>
    <recommendedName>
        <fullName>Replicase polyprotein 1ab</fullName>
    </recommendedName>
    <alternativeName>
        <fullName>ORF1ab polyprotein</fullName>
    </alternativeName>
    <component>
        <recommendedName>
            <fullName>Nsp1</fullName>
            <ecNumber>3.4.22.-</ecNumber>
        </recommendedName>
    </component>
    <component>
        <recommendedName>
            <fullName>Nsp1-alpha papain-like cysteine proteinase</fullName>
            <ecNumber>3.4.22.-</ecNumber>
        </recommendedName>
        <alternativeName>
            <fullName>PCP1-alpha</fullName>
        </alternativeName>
    </component>
    <component>
        <recommendedName>
            <fullName>Nsp1-beta papain-like cysteine proteinase</fullName>
            <ecNumber>3.4.22.-</ecNumber>
        </recommendedName>
        <alternativeName>
            <fullName>PCP1-beta</fullName>
        </alternativeName>
    </component>
    <component>
        <recommendedName>
            <fullName>Nsp2 cysteine proteinase</fullName>
            <ecNumber>3.4.19.12</ecNumber>
            <ecNumber>3.4.22.-</ecNumber>
        </recommendedName>
        <alternativeName>
            <fullName>CP2</fullName>
            <shortName>CP</shortName>
        </alternativeName>
    </component>
    <component>
        <recommendedName>
            <fullName>Non-structural protein 3</fullName>
            <shortName>Nsp3</shortName>
        </recommendedName>
    </component>
    <component>
        <recommendedName>
            <fullName>Serine protease nsp4</fullName>
            <shortName>3CLSP</shortName>
            <ecNumber>3.4.21.-</ecNumber>
        </recommendedName>
        <alternativeName>
            <fullName>3C-like serine proteinase</fullName>
        </alternativeName>
        <alternativeName>
            <fullName>Nsp4</fullName>
        </alternativeName>
    </component>
    <component>
        <recommendedName>
            <fullName>Non-structural protein 5-6-7</fullName>
            <shortName>Nsp5-6-7</shortName>
        </recommendedName>
    </component>
    <component>
        <recommendedName>
            <fullName>Non-structural protein 5</fullName>
            <shortName>Nsp5</shortName>
        </recommendedName>
    </component>
    <component>
        <recommendedName>
            <fullName>Non-structural protein 6</fullName>
            <shortName>Nsp6</shortName>
        </recommendedName>
    </component>
    <component>
        <recommendedName>
            <fullName>Non-structural protein 7-alpha</fullName>
            <shortName>Nsp7-alpha</shortName>
        </recommendedName>
    </component>
    <component>
        <recommendedName>
            <fullName>Non-structural protein 7-beta</fullName>
            <shortName>Nsp7-beta</shortName>
        </recommendedName>
    </component>
    <component>
        <recommendedName>
            <fullName>Non-structural protein 8</fullName>
            <shortName>Nsp8</shortName>
        </recommendedName>
    </component>
    <component>
        <recommendedName>
            <fullName>RNA-directed RNA polymerase</fullName>
            <shortName>Pol</shortName>
            <shortName>RdRp</shortName>
            <ecNumber>2.7.7.48</ecNumber>
        </recommendedName>
        <alternativeName>
            <fullName>Nsp9</fullName>
        </alternativeName>
    </component>
    <component>
        <recommendedName>
            <fullName>Helicase nsp10</fullName>
            <shortName>Hel</shortName>
            <ecNumber>3.6.4.12</ecNumber>
            <ecNumber>3.6.4.13</ecNumber>
        </recommendedName>
        <alternativeName>
            <fullName>Nsp10</fullName>
        </alternativeName>
    </component>
    <component>
        <recommendedName>
            <fullName>Uridylate-specific endoribonuclease nsp11</fullName>
            <ecNumber>4.6.1.-</ecNumber>
        </recommendedName>
        <alternativeName>
            <fullName>Non-structural protein 11</fullName>
            <shortName>Nsp11</shortName>
        </alternativeName>
    </component>
    <component>
        <recommendedName>
            <fullName>Non-structural protein 12</fullName>
            <shortName>Nsp12</shortName>
        </recommendedName>
    </component>
</protein>
<sequence>MSGILDRCTCTPNARVFVAEGQVYCTRCLSARSLLPLNLQVPELGVLGLFYRPEEPLRWTLPRAFPTVECSPTGACWLSAIFPIARMTSGNLNFQQRMVRVAGEIYRAGQLTPTVLKTIQVYERGCRWYPIVGPVPGVGVYANSLHVSDKPFPGATHVLTNLPLPQRPKPEDFCPFECAMADVYDIGRGAVMYVAGGKVSWAPRGGDEVKFEPVPKELKLVANRLHTSFPPHHVVDMSKFTFMTPGSGVSMRVEYQYGCLPADTVPEGNCWWRLFDLLPPEVQNKEIRHANQFGYQTKHGVPGKYLQRRLQVNGLRAVTDTHGPIVIQYFSVKESWIRHLKPVEEPSLPGFEDLLRIRVEPNTSPLAGKNEKIFRFGSHKWYGAGKRARKARSGATTMVAHRASSAHETRQATKHEGAGANKAEHLKLYSPPAEGNCGWHCISAIVNRMVNSNFETTLPERVRPPDDWATDEDLVNTIQILRLPAALDRNGACGGAKYVLKLEGEHWTVSVNPGMSPSLLPLECVQGCCEHKGGLGSPDAVEVSGFDPACLDRLLQVMHLPSSTIPAALAELSDDSNRPVSPAAATWTVSQSYARHRGGNHHDQVCLGKIISLCQVIEDCCCHQNKTNRATPEEVAAKIDQYLRGATSLEECLAKLERVSPPGAADTSFDWNVVLPGVEAAHQTTEQLHVNPCRTLVPPVTQEPLGKDSVPLTAFSLSNCYYPAQGNEVRHRERLNSVLSKLEEVVLEEYGLMSTGLGPRPVLPSGLDELKDQMEEDLLKLANTQATSEMMAWAAEQVDLKAWVKSYPRWTPPPPPPRVQPRKTKSVKSLPEDKPVPAPRRKVRSGCGSPVLMGDNVPNGSEDLTVGGPLNFPTPSEPMTPMSEPVLTPALQRVPKLMTPLDGSAPVPAPRRTVSRPMTPLSEPIFLSAPRHKFQQVEEANPATTTLTHQNEPLDLSASSQTEYEASPLASSQNMSILEAGGQEAEEVLSEISDILNDTSPAPVSSSSSLSSVKITRPKYSAQAIIDSGGPCSGHLQKEKEACLSIMREACDASKLSDPATQEWLSRMWDRVDMLTWRNTSAYQAFRTLNGRFEFLPKMILETPPPHPCGFVMLPHTPAPSVSAESDLTIGSVATEDVPRILGKIGDTGELLNQGPSAPFKGGPVCDQPAKNSRMSPRESDESIIAPPADTGGAGSFTDLPSSDSVDANGGGPLRTVKTKAGRLLDQLSCQVFSLVSHLPVFFSHLFKSDSGYSPGDWGFAAFTLFCLFLCYSYPFFGFAPLLGVFSGSSRRVRMGVFGCWLAFAVGLFKPVSDPVGTACEFDSPECRNVLHSFELLKPWDPVRSLVVGPVGLGLAILGRLLGGARYVWHFLLRFGIVADCILAGAYVLSQGRCKKCWGSCVRTAPNEIAFNVFPFTRATRSSLIDLCDRFCAPKGMDPIFLATVWRGCWTGRSPIEQPSEKPIAFAQLDEKRITARTVVAQPYDPNQAVKCLRVLQAGGAMVAEAVPKVVKVSAIPFRAPFFPAGVKVDPECRIVVDPDTFTTALRSGYSTTNLVLGMGDFAQLNGLKIRQISKPSGGGSHLVAALHVACSMALHMLAGVYVTAVGSCGTGTNDPWCTNPFAAPGYGPGSLCTSRLCISQHGLTLPLTALVAGFGLQEIALVVLIFVSMGGMAHRLSCKADMLCILLAIASYVWVPLTWLLCVFPCWLRWFSLHPLTILWLVFFLISVNIPSGILAVVLLVSLWLLGRYTNIAGLVTPYDIHHYTSGPRGVAALATAPDGTYLAAVRRAALTGRTMLFTPSQLGSLLEGAFRTQKPSLNTVNVVGSSMGSGGVFTIDGKIKCVTAAHVLTGNSARVSGVGFNQMLDFDVKGDFAIADCPNWQGAAPKAQFCEDGWTGRAYWLTSSGVEPGVIGNGFAFCFTACGDSGSPVITEAGELVGVHTGSNKQGGGIVTRPSGQFCNVTPIKLSELSEFFAGPKVPLGDVKIGSHIIKDTCEVPSDLCALLAAKPELEGGLSTVQLLCVFFLLWRMMGHAWTPLVAVGFFILNEILPAVLVRSVFSFGMFVLSWLTPWSAQVLMIRLLTAALNRNRLSLGFYSLGAVTSFVADLAVTQGHPLQVVMNLSTYAFLPRMMVVTSPVPVIACGVVHLLAIILYLFKYRCLHYVLVGDGVFSSAFFLRYFAEGKLREGVSQSCGMSHESLTGALAMRLTDEDLDFLTKWTDFKCFVSASNMRNAAGQFIEAAYAKALRIELAQLVQVDKVRGTLAKLEAFADTVAPQLSPGDIVVALGHTPVGSIFDLKVGSTKHTLQAIETRVLAGSKMTVARVVDPTPAPPPVPVPIPLPPKVLENGPNAWGDEDRLNKKKRRRMEAVGIFVMDGKKYQKFWDKNSGDVFYEEVHNSTDEWECLRAGDPADFDPETGVQCGHITIEDRVYNVFTSPSGRKFLVPANPENRRAQWEAAKLSVEQALGMMNVDGELTAKELEKLKGIIDKLQGLTKEQCLNCLLAASGLTRCGRGGLVVTETAVKIVKFHNRTFTLGPVNLKVASEVELKDAVEHNQHPVARPVDGGVVLLRSAVPSLIDVLISGADASPKLLARHGPGNTGIDGTLWDFEAEATKEEVALSAQIIQACDIRRGDAPEIGLPYKLYPVRGNPERVKGVLQNTRFGDIPYKTPSDTGSPVHAAACLTPNATPVTDGRSVLATTMPSGFELYVPTIPASVLDYLDSRPDCPKQLTEHGCEDAALRDLSKYDLVTQGFVLPGVLRLVRKYLFAHVGKCPPVHRPSTYPAKNSMAGINGNRFPTKDIQSVPEIDVLCAQAVRENWQTVTPCTLKKQYCGKKKTRTILGTNNFIALAHRAALSGVTQGFMKKAFNSPIALGKNKFKELQTPVLGRCLEADLASCDRSTPAIVRWFAANLLYELACAEEHLPSYVLNCCHDLLVTQSGAVTKRGGLSSGDPITSVSNTIYSLVIYAQHMVLSYFKSGHPHGLLFLQDQLKFEDMLKVQPLIVYSDDLVLYAESPSMPNYHWWVEHLNLMLGFQTDPKKTAITDSPTFLGCRIINGRQLVPNRDRILAALAYHMKASNVSEYYASAAAILMDSCACLEYDPEWFEELVVGIAQCARKDGYSFPGPPFFLSMWEKLRSNHEGKKSRMCGYCMAPAPYATACGLDVCVYHTHFHQHCPVIIWCGHPAGSGSCGECEPPLGKGTSPLDEVLEQVPYKPPRTVIMHVEQGLTPLDPGRYQTRRGLVSVRRGIRGNEVDLPDGDYASTALLPTCKEINMVAVAPNVLRSRFIIGPPGAGKTHWLLQQVQDGDVIYTPTHQTMLDMIRALGTCRFNVPAGTTLQFPAPSRTGPWVRILAGGWCPGKNSFLDEAAYCNHLDVLRLLSKTTLTCLGDFKQLHPVGFDSHCYVFDIMPQTQLKTIWRFGQNICDAIQPDYRDKLVSMVNTTRVTYVEKPVRYGQVLTPYHRDREDGAITIDSSQGATFDVVTLHLPTKDSLNRQRALVAITRARHAIFVYDPHRQLQSMFDLPAKGTPVNLAVHRDEQLIVLDRNNKEITVAQALGNGDKFRATDKRVVDSLRAICADLEGSSSPLPKVAHNLGFYFSPDLTQFAKLPAELAPHWPVVTTQNNERWPDRLVASLRPIHKYSRACIGAGYMVGPSVFLGTPGVVSYYLTKFVRGEAQVLPETVFSTGRIEVDCREYLDDREREVAESLPHAFIGDVKGTTVGGCHHVTSKYLPRFLPKESVAVVGVSSPGEAAKAFCTLTDVYLPDLEAYLHPETQSKCWKVMLDFKEVRLMVWKGKTAYFQLEGRHFTWYQLASYTSYIRVPVNSTVYLDPCMGPALCNRRVVGSTHWGADLAVTPYDYGAKIILSSAYHGEMPPGYKILACAEFSLDDPVRYKHTWGFESDTAYLYEFTGNGEDWEDYNGAFRARQKGKIYKATATSMKFHFPPGPVIEPTLGLN</sequence>
<gene>
    <name type="primary">rep</name>
    <name type="ORF">1a-1b</name>
</gene>